<feature type="chain" id="PRO_1000184529" description="ATP synthase subunit c">
    <location>
        <begin position="1"/>
        <end position="85"/>
    </location>
</feature>
<feature type="transmembrane region" description="Helical" evidence="1">
    <location>
        <begin position="10"/>
        <end position="30"/>
    </location>
</feature>
<feature type="transmembrane region" description="Helical" evidence="1">
    <location>
        <begin position="53"/>
        <end position="73"/>
    </location>
</feature>
<feature type="site" description="Reversibly protonated during proton transport" evidence="1">
    <location>
        <position position="60"/>
    </location>
</feature>
<gene>
    <name evidence="1" type="primary">atpE</name>
    <name type="ordered locus">VCM66_2689</name>
</gene>
<proteinExistence type="inferred from homology"/>
<name>ATPL_VIBCM</name>
<sequence length="85" mass="8695">METVLSFSAIAVAIIVGLCAVGTAIGFAVLGGKFLEGAARQPEMAPMLQVKMFIIAGLLDAVPMIGIVIALLFTFANPFVGQLAG</sequence>
<protein>
    <recommendedName>
        <fullName evidence="1">ATP synthase subunit c</fullName>
    </recommendedName>
    <alternativeName>
        <fullName evidence="1">ATP synthase F(0) sector subunit c</fullName>
    </alternativeName>
    <alternativeName>
        <fullName evidence="1">F-type ATPase subunit c</fullName>
        <shortName evidence="1">F-ATPase subunit c</shortName>
    </alternativeName>
    <alternativeName>
        <fullName evidence="1">Lipid-binding protein</fullName>
    </alternativeName>
</protein>
<dbReference type="EMBL" id="CP001233">
    <property type="protein sequence ID" value="ACP06981.1"/>
    <property type="molecule type" value="Genomic_DNA"/>
</dbReference>
<dbReference type="RefSeq" id="WP_000450922.1">
    <property type="nucleotide sequence ID" value="NC_012578.1"/>
</dbReference>
<dbReference type="SMR" id="C3LSJ4"/>
<dbReference type="GeneID" id="94015074"/>
<dbReference type="KEGG" id="vcm:VCM66_2689"/>
<dbReference type="HOGENOM" id="CLU_148047_1_0_6"/>
<dbReference type="Proteomes" id="UP000001217">
    <property type="component" value="Chromosome I"/>
</dbReference>
<dbReference type="GO" id="GO:0005886">
    <property type="term" value="C:plasma membrane"/>
    <property type="evidence" value="ECO:0007669"/>
    <property type="project" value="UniProtKB-SubCell"/>
</dbReference>
<dbReference type="GO" id="GO:0045259">
    <property type="term" value="C:proton-transporting ATP synthase complex"/>
    <property type="evidence" value="ECO:0007669"/>
    <property type="project" value="UniProtKB-KW"/>
</dbReference>
<dbReference type="GO" id="GO:0033177">
    <property type="term" value="C:proton-transporting two-sector ATPase complex, proton-transporting domain"/>
    <property type="evidence" value="ECO:0007669"/>
    <property type="project" value="InterPro"/>
</dbReference>
<dbReference type="GO" id="GO:0008289">
    <property type="term" value="F:lipid binding"/>
    <property type="evidence" value="ECO:0007669"/>
    <property type="project" value="UniProtKB-KW"/>
</dbReference>
<dbReference type="GO" id="GO:0046933">
    <property type="term" value="F:proton-transporting ATP synthase activity, rotational mechanism"/>
    <property type="evidence" value="ECO:0007669"/>
    <property type="project" value="UniProtKB-UniRule"/>
</dbReference>
<dbReference type="CDD" id="cd18185">
    <property type="entry name" value="ATP-synt_Fo_c_ATPE"/>
    <property type="match status" value="1"/>
</dbReference>
<dbReference type="FunFam" id="1.20.20.10:FF:000002">
    <property type="entry name" value="ATP synthase subunit c"/>
    <property type="match status" value="1"/>
</dbReference>
<dbReference type="Gene3D" id="1.20.20.10">
    <property type="entry name" value="F1F0 ATP synthase subunit C"/>
    <property type="match status" value="1"/>
</dbReference>
<dbReference type="HAMAP" id="MF_01396">
    <property type="entry name" value="ATP_synth_c_bact"/>
    <property type="match status" value="1"/>
</dbReference>
<dbReference type="InterPro" id="IPR005953">
    <property type="entry name" value="ATP_synth_csu_bac/chlpt"/>
</dbReference>
<dbReference type="InterPro" id="IPR000454">
    <property type="entry name" value="ATP_synth_F0_csu"/>
</dbReference>
<dbReference type="InterPro" id="IPR020537">
    <property type="entry name" value="ATP_synth_F0_csu_DDCD_BS"/>
</dbReference>
<dbReference type="InterPro" id="IPR038662">
    <property type="entry name" value="ATP_synth_F0_csu_sf"/>
</dbReference>
<dbReference type="InterPro" id="IPR002379">
    <property type="entry name" value="ATPase_proteolipid_c-like_dom"/>
</dbReference>
<dbReference type="InterPro" id="IPR035921">
    <property type="entry name" value="F/V-ATP_Csub_sf"/>
</dbReference>
<dbReference type="NCBIfam" id="TIGR01260">
    <property type="entry name" value="ATP_synt_c"/>
    <property type="match status" value="1"/>
</dbReference>
<dbReference type="NCBIfam" id="NF005363">
    <property type="entry name" value="PRK06876.1"/>
    <property type="match status" value="1"/>
</dbReference>
<dbReference type="Pfam" id="PF00137">
    <property type="entry name" value="ATP-synt_C"/>
    <property type="match status" value="1"/>
</dbReference>
<dbReference type="PRINTS" id="PR00124">
    <property type="entry name" value="ATPASEC"/>
</dbReference>
<dbReference type="SUPFAM" id="SSF81333">
    <property type="entry name" value="F1F0 ATP synthase subunit C"/>
    <property type="match status" value="1"/>
</dbReference>
<dbReference type="PROSITE" id="PS00605">
    <property type="entry name" value="ATPASE_C"/>
    <property type="match status" value="1"/>
</dbReference>
<accession>C3LSJ4</accession>
<keyword id="KW-0066">ATP synthesis</keyword>
<keyword id="KW-0997">Cell inner membrane</keyword>
<keyword id="KW-1003">Cell membrane</keyword>
<keyword id="KW-0138">CF(0)</keyword>
<keyword id="KW-0375">Hydrogen ion transport</keyword>
<keyword id="KW-0406">Ion transport</keyword>
<keyword id="KW-0446">Lipid-binding</keyword>
<keyword id="KW-0472">Membrane</keyword>
<keyword id="KW-0812">Transmembrane</keyword>
<keyword id="KW-1133">Transmembrane helix</keyword>
<keyword id="KW-0813">Transport</keyword>
<evidence type="ECO:0000255" key="1">
    <source>
        <dbReference type="HAMAP-Rule" id="MF_01396"/>
    </source>
</evidence>
<organism>
    <name type="scientific">Vibrio cholerae serotype O1 (strain M66-2)</name>
    <dbReference type="NCBI Taxonomy" id="579112"/>
    <lineage>
        <taxon>Bacteria</taxon>
        <taxon>Pseudomonadati</taxon>
        <taxon>Pseudomonadota</taxon>
        <taxon>Gammaproteobacteria</taxon>
        <taxon>Vibrionales</taxon>
        <taxon>Vibrionaceae</taxon>
        <taxon>Vibrio</taxon>
    </lineage>
</organism>
<reference key="1">
    <citation type="journal article" date="2008" name="PLoS ONE">
        <title>A recalibrated molecular clock and independent origins for the cholera pandemic clones.</title>
        <authorList>
            <person name="Feng L."/>
            <person name="Reeves P.R."/>
            <person name="Lan R."/>
            <person name="Ren Y."/>
            <person name="Gao C."/>
            <person name="Zhou Z."/>
            <person name="Ren Y."/>
            <person name="Cheng J."/>
            <person name="Wang W."/>
            <person name="Wang J."/>
            <person name="Qian W."/>
            <person name="Li D."/>
            <person name="Wang L."/>
        </authorList>
    </citation>
    <scope>NUCLEOTIDE SEQUENCE [LARGE SCALE GENOMIC DNA]</scope>
    <source>
        <strain>M66-2</strain>
    </source>
</reference>
<comment type="function">
    <text evidence="1">F(1)F(0) ATP synthase produces ATP from ADP in the presence of a proton or sodium gradient. F-type ATPases consist of two structural domains, F(1) containing the extramembraneous catalytic core and F(0) containing the membrane proton channel, linked together by a central stalk and a peripheral stalk. During catalysis, ATP synthesis in the catalytic domain of F(1) is coupled via a rotary mechanism of the central stalk subunits to proton translocation.</text>
</comment>
<comment type="function">
    <text evidence="1">Key component of the F(0) channel; it plays a direct role in translocation across the membrane. A homomeric c-ring of between 10-14 subunits forms the central stalk rotor element with the F(1) delta and epsilon subunits.</text>
</comment>
<comment type="subunit">
    <text evidence="1">F-type ATPases have 2 components, F(1) - the catalytic core - and F(0) - the membrane proton channel. F(1) has five subunits: alpha(3), beta(3), gamma(1), delta(1), epsilon(1). F(0) has three main subunits: a(1), b(2) and c(10-14). The alpha and beta chains form an alternating ring which encloses part of the gamma chain. F(1) is attached to F(0) by a central stalk formed by the gamma and epsilon chains, while a peripheral stalk is formed by the delta and b chains.</text>
</comment>
<comment type="subcellular location">
    <subcellularLocation>
        <location evidence="1">Cell inner membrane</location>
        <topology evidence="1">Multi-pass membrane protein</topology>
    </subcellularLocation>
</comment>
<comment type="similarity">
    <text evidence="1">Belongs to the ATPase C chain family.</text>
</comment>